<feature type="chain" id="PRO_1000126704" description="Large ribosomal subunit protein bL31">
    <location>
        <begin position="1"/>
        <end position="70"/>
    </location>
</feature>
<feature type="binding site" evidence="1">
    <location>
        <position position="16"/>
    </location>
    <ligand>
        <name>Zn(2+)</name>
        <dbReference type="ChEBI" id="CHEBI:29105"/>
    </ligand>
</feature>
<feature type="binding site" evidence="1">
    <location>
        <position position="18"/>
    </location>
    <ligand>
        <name>Zn(2+)</name>
        <dbReference type="ChEBI" id="CHEBI:29105"/>
    </ligand>
</feature>
<feature type="binding site" evidence="1">
    <location>
        <position position="37"/>
    </location>
    <ligand>
        <name>Zn(2+)</name>
        <dbReference type="ChEBI" id="CHEBI:29105"/>
    </ligand>
</feature>
<feature type="binding site" evidence="1">
    <location>
        <position position="40"/>
    </location>
    <ligand>
        <name>Zn(2+)</name>
        <dbReference type="ChEBI" id="CHEBI:29105"/>
    </ligand>
</feature>
<sequence length="70" mass="7578">MKNAIHPEYKEITATCSCGNIVTVGSTAGKNLTLDICGECHPFYTGTQRVVDTGGRIEKFKNRFGALGKK</sequence>
<proteinExistence type="inferred from homology"/>
<name>RL31_PSYIN</name>
<comment type="function">
    <text evidence="1">Binds the 23S rRNA.</text>
</comment>
<comment type="cofactor">
    <cofactor evidence="1">
        <name>Zn(2+)</name>
        <dbReference type="ChEBI" id="CHEBI:29105"/>
    </cofactor>
    <text evidence="1">Binds 1 zinc ion per subunit.</text>
</comment>
<comment type="subunit">
    <text evidence="1">Part of the 50S ribosomal subunit.</text>
</comment>
<comment type="similarity">
    <text evidence="1">Belongs to the bacterial ribosomal protein bL31 family. Type A subfamily.</text>
</comment>
<gene>
    <name evidence="1" type="primary">rpmE</name>
    <name type="ordered locus">Ping_2858</name>
</gene>
<accession>A1SYJ9</accession>
<dbReference type="EMBL" id="CP000510">
    <property type="protein sequence ID" value="ABM04564.1"/>
    <property type="molecule type" value="Genomic_DNA"/>
</dbReference>
<dbReference type="RefSeq" id="WP_011771118.1">
    <property type="nucleotide sequence ID" value="NC_008709.1"/>
</dbReference>
<dbReference type="SMR" id="A1SYJ9"/>
<dbReference type="STRING" id="357804.Ping_2858"/>
<dbReference type="KEGG" id="pin:Ping_2858"/>
<dbReference type="eggNOG" id="COG0254">
    <property type="taxonomic scope" value="Bacteria"/>
</dbReference>
<dbReference type="HOGENOM" id="CLU_114306_4_3_6"/>
<dbReference type="OrthoDB" id="9803251at2"/>
<dbReference type="Proteomes" id="UP000000639">
    <property type="component" value="Chromosome"/>
</dbReference>
<dbReference type="GO" id="GO:1990904">
    <property type="term" value="C:ribonucleoprotein complex"/>
    <property type="evidence" value="ECO:0007669"/>
    <property type="project" value="UniProtKB-KW"/>
</dbReference>
<dbReference type="GO" id="GO:0005840">
    <property type="term" value="C:ribosome"/>
    <property type="evidence" value="ECO:0007669"/>
    <property type="project" value="UniProtKB-KW"/>
</dbReference>
<dbReference type="GO" id="GO:0046872">
    <property type="term" value="F:metal ion binding"/>
    <property type="evidence" value="ECO:0007669"/>
    <property type="project" value="UniProtKB-KW"/>
</dbReference>
<dbReference type="GO" id="GO:0019843">
    <property type="term" value="F:rRNA binding"/>
    <property type="evidence" value="ECO:0007669"/>
    <property type="project" value="UniProtKB-KW"/>
</dbReference>
<dbReference type="GO" id="GO:0003735">
    <property type="term" value="F:structural constituent of ribosome"/>
    <property type="evidence" value="ECO:0007669"/>
    <property type="project" value="InterPro"/>
</dbReference>
<dbReference type="GO" id="GO:0006412">
    <property type="term" value="P:translation"/>
    <property type="evidence" value="ECO:0007669"/>
    <property type="project" value="UniProtKB-UniRule"/>
</dbReference>
<dbReference type="Gene3D" id="4.10.830.30">
    <property type="entry name" value="Ribosomal protein L31"/>
    <property type="match status" value="1"/>
</dbReference>
<dbReference type="HAMAP" id="MF_00501">
    <property type="entry name" value="Ribosomal_bL31_1"/>
    <property type="match status" value="1"/>
</dbReference>
<dbReference type="InterPro" id="IPR034704">
    <property type="entry name" value="Ribosomal_bL28/bL31-like_sf"/>
</dbReference>
<dbReference type="InterPro" id="IPR002150">
    <property type="entry name" value="Ribosomal_bL31"/>
</dbReference>
<dbReference type="InterPro" id="IPR027491">
    <property type="entry name" value="Ribosomal_bL31_A"/>
</dbReference>
<dbReference type="InterPro" id="IPR042105">
    <property type="entry name" value="Ribosomal_bL31_sf"/>
</dbReference>
<dbReference type="NCBIfam" id="TIGR00105">
    <property type="entry name" value="L31"/>
    <property type="match status" value="1"/>
</dbReference>
<dbReference type="NCBIfam" id="NF000612">
    <property type="entry name" value="PRK00019.1"/>
    <property type="match status" value="1"/>
</dbReference>
<dbReference type="NCBIfam" id="NF001809">
    <property type="entry name" value="PRK00528.1"/>
    <property type="match status" value="1"/>
</dbReference>
<dbReference type="PANTHER" id="PTHR33280">
    <property type="entry name" value="50S RIBOSOMAL PROTEIN L31, CHLOROPLASTIC"/>
    <property type="match status" value="1"/>
</dbReference>
<dbReference type="PANTHER" id="PTHR33280:SF6">
    <property type="entry name" value="LARGE RIBOSOMAL SUBUNIT PROTEIN BL31A"/>
    <property type="match status" value="1"/>
</dbReference>
<dbReference type="Pfam" id="PF01197">
    <property type="entry name" value="Ribosomal_L31"/>
    <property type="match status" value="1"/>
</dbReference>
<dbReference type="PRINTS" id="PR01249">
    <property type="entry name" value="RIBOSOMALL31"/>
</dbReference>
<dbReference type="SUPFAM" id="SSF143800">
    <property type="entry name" value="L28p-like"/>
    <property type="match status" value="1"/>
</dbReference>
<dbReference type="PROSITE" id="PS01143">
    <property type="entry name" value="RIBOSOMAL_L31"/>
    <property type="match status" value="1"/>
</dbReference>
<evidence type="ECO:0000255" key="1">
    <source>
        <dbReference type="HAMAP-Rule" id="MF_00501"/>
    </source>
</evidence>
<evidence type="ECO:0000305" key="2"/>
<reference key="1">
    <citation type="journal article" date="2008" name="BMC Genomics">
        <title>Genomics of an extreme psychrophile, Psychromonas ingrahamii.</title>
        <authorList>
            <person name="Riley M."/>
            <person name="Staley J.T."/>
            <person name="Danchin A."/>
            <person name="Wang T.Z."/>
            <person name="Brettin T.S."/>
            <person name="Hauser L.J."/>
            <person name="Land M.L."/>
            <person name="Thompson L.S."/>
        </authorList>
    </citation>
    <scope>NUCLEOTIDE SEQUENCE [LARGE SCALE GENOMIC DNA]</scope>
    <source>
        <strain>DSM 17664 / CCUG 51855 / 37</strain>
    </source>
</reference>
<protein>
    <recommendedName>
        <fullName evidence="1">Large ribosomal subunit protein bL31</fullName>
    </recommendedName>
    <alternativeName>
        <fullName evidence="2">50S ribosomal protein L31</fullName>
    </alternativeName>
</protein>
<organism>
    <name type="scientific">Psychromonas ingrahamii (strain DSM 17664 / CCUG 51855 / 37)</name>
    <dbReference type="NCBI Taxonomy" id="357804"/>
    <lineage>
        <taxon>Bacteria</taxon>
        <taxon>Pseudomonadati</taxon>
        <taxon>Pseudomonadota</taxon>
        <taxon>Gammaproteobacteria</taxon>
        <taxon>Alteromonadales</taxon>
        <taxon>Psychromonadaceae</taxon>
        <taxon>Psychromonas</taxon>
    </lineage>
</organism>
<keyword id="KW-0479">Metal-binding</keyword>
<keyword id="KW-1185">Reference proteome</keyword>
<keyword id="KW-0687">Ribonucleoprotein</keyword>
<keyword id="KW-0689">Ribosomal protein</keyword>
<keyword id="KW-0694">RNA-binding</keyword>
<keyword id="KW-0699">rRNA-binding</keyword>
<keyword id="KW-0862">Zinc</keyword>